<comment type="function">
    <text evidence="1">Responsible for synthesis of pseudouridine from uracil-55 in the psi GC loop of transfer RNAs.</text>
</comment>
<comment type="catalytic activity">
    <reaction evidence="1">
        <text>uridine(55) in tRNA = pseudouridine(55) in tRNA</text>
        <dbReference type="Rhea" id="RHEA:42532"/>
        <dbReference type="Rhea" id="RHEA-COMP:10101"/>
        <dbReference type="Rhea" id="RHEA-COMP:10102"/>
        <dbReference type="ChEBI" id="CHEBI:65314"/>
        <dbReference type="ChEBI" id="CHEBI:65315"/>
        <dbReference type="EC" id="5.4.99.25"/>
    </reaction>
</comment>
<comment type="similarity">
    <text evidence="1">Belongs to the pseudouridine synthase TruB family. Type 1 subfamily.</text>
</comment>
<keyword id="KW-0413">Isomerase</keyword>
<keyword id="KW-0819">tRNA processing</keyword>
<gene>
    <name evidence="1" type="primary">truB</name>
    <name type="ordered locus">P9515_15081</name>
</gene>
<dbReference type="EC" id="5.4.99.25" evidence="1"/>
<dbReference type="EMBL" id="CP000552">
    <property type="protein sequence ID" value="ABM72715.1"/>
    <property type="molecule type" value="Genomic_DNA"/>
</dbReference>
<dbReference type="RefSeq" id="WP_011820811.1">
    <property type="nucleotide sequence ID" value="NC_008817.1"/>
</dbReference>
<dbReference type="SMR" id="A2BY54"/>
<dbReference type="STRING" id="167542.P9515_15081"/>
<dbReference type="GeneID" id="60200747"/>
<dbReference type="KEGG" id="pmc:P9515_15081"/>
<dbReference type="eggNOG" id="COG0130">
    <property type="taxonomic scope" value="Bacteria"/>
</dbReference>
<dbReference type="HOGENOM" id="CLU_032087_0_0_3"/>
<dbReference type="OrthoDB" id="9802309at2"/>
<dbReference type="Proteomes" id="UP000001589">
    <property type="component" value="Chromosome"/>
</dbReference>
<dbReference type="GO" id="GO:0003723">
    <property type="term" value="F:RNA binding"/>
    <property type="evidence" value="ECO:0007669"/>
    <property type="project" value="InterPro"/>
</dbReference>
<dbReference type="GO" id="GO:0160148">
    <property type="term" value="F:tRNA pseudouridine(55) synthase activity"/>
    <property type="evidence" value="ECO:0007669"/>
    <property type="project" value="UniProtKB-EC"/>
</dbReference>
<dbReference type="GO" id="GO:1990481">
    <property type="term" value="P:mRNA pseudouridine synthesis"/>
    <property type="evidence" value="ECO:0007669"/>
    <property type="project" value="TreeGrafter"/>
</dbReference>
<dbReference type="GO" id="GO:0031119">
    <property type="term" value="P:tRNA pseudouridine synthesis"/>
    <property type="evidence" value="ECO:0007669"/>
    <property type="project" value="UniProtKB-UniRule"/>
</dbReference>
<dbReference type="CDD" id="cd02573">
    <property type="entry name" value="PseudoU_synth_EcTruB"/>
    <property type="match status" value="1"/>
</dbReference>
<dbReference type="Gene3D" id="3.30.2350.10">
    <property type="entry name" value="Pseudouridine synthase"/>
    <property type="match status" value="1"/>
</dbReference>
<dbReference type="HAMAP" id="MF_01080">
    <property type="entry name" value="TruB_bact"/>
    <property type="match status" value="1"/>
</dbReference>
<dbReference type="InterPro" id="IPR020103">
    <property type="entry name" value="PsdUridine_synth_cat_dom_sf"/>
</dbReference>
<dbReference type="InterPro" id="IPR002501">
    <property type="entry name" value="PsdUridine_synth_N"/>
</dbReference>
<dbReference type="InterPro" id="IPR014780">
    <property type="entry name" value="tRNA_psdUridine_synth_TruB"/>
</dbReference>
<dbReference type="NCBIfam" id="TIGR00431">
    <property type="entry name" value="TruB"/>
    <property type="match status" value="1"/>
</dbReference>
<dbReference type="PANTHER" id="PTHR13767:SF2">
    <property type="entry name" value="PSEUDOURIDYLATE SYNTHASE TRUB1"/>
    <property type="match status" value="1"/>
</dbReference>
<dbReference type="PANTHER" id="PTHR13767">
    <property type="entry name" value="TRNA-PSEUDOURIDINE SYNTHASE"/>
    <property type="match status" value="1"/>
</dbReference>
<dbReference type="Pfam" id="PF01509">
    <property type="entry name" value="TruB_N"/>
    <property type="match status" value="1"/>
</dbReference>
<dbReference type="SUPFAM" id="SSF55120">
    <property type="entry name" value="Pseudouridine synthase"/>
    <property type="match status" value="1"/>
</dbReference>
<accession>A2BY54</accession>
<organism>
    <name type="scientific">Prochlorococcus marinus (strain MIT 9515)</name>
    <dbReference type="NCBI Taxonomy" id="167542"/>
    <lineage>
        <taxon>Bacteria</taxon>
        <taxon>Bacillati</taxon>
        <taxon>Cyanobacteriota</taxon>
        <taxon>Cyanophyceae</taxon>
        <taxon>Synechococcales</taxon>
        <taxon>Prochlorococcaceae</taxon>
        <taxon>Prochlorococcus</taxon>
    </lineage>
</organism>
<sequence length="305" mass="34618">MEIKDGFIIINKEKGYTSHDCVQQIRKLLGTKKVGHTGTLDPGVTGTLPIAIGSATRFIQYLPQGKTYIGQIQLGIRTKTDDIQGEIINKKEWPILSNAQLDKFLNKFRGIIQQIPPKVSSVHVNGERAYKKFFKNEEFELKPREVKIEELVLKKWDQINGILEIKISCSTGTYIRSIARDLGGVLDSEGCLLNLKRISACGFHEKNSIKISDLVNLNKNCSTFIIPTIYALDHISTLILNNQEEINFWETGRLIKLDEENLIKSSKFDYKKPIKIINNQKMLLGIGFINEDKNKLHPKLVLNAK</sequence>
<name>TRUB_PROM5</name>
<proteinExistence type="inferred from homology"/>
<protein>
    <recommendedName>
        <fullName evidence="1">tRNA pseudouridine synthase B</fullName>
        <ecNumber evidence="1">5.4.99.25</ecNumber>
    </recommendedName>
    <alternativeName>
        <fullName evidence="1">tRNA pseudouridine(55) synthase</fullName>
        <shortName evidence="1">Psi55 synthase</shortName>
    </alternativeName>
    <alternativeName>
        <fullName evidence="1">tRNA pseudouridylate synthase</fullName>
    </alternativeName>
    <alternativeName>
        <fullName evidence="1">tRNA-uridine isomerase</fullName>
    </alternativeName>
</protein>
<evidence type="ECO:0000255" key="1">
    <source>
        <dbReference type="HAMAP-Rule" id="MF_01080"/>
    </source>
</evidence>
<feature type="chain" id="PRO_1000084640" description="tRNA pseudouridine synthase B">
    <location>
        <begin position="1"/>
        <end position="305"/>
    </location>
</feature>
<feature type="active site" description="Nucleophile" evidence="1">
    <location>
        <position position="41"/>
    </location>
</feature>
<reference key="1">
    <citation type="journal article" date="2007" name="PLoS Genet.">
        <title>Patterns and implications of gene gain and loss in the evolution of Prochlorococcus.</title>
        <authorList>
            <person name="Kettler G.C."/>
            <person name="Martiny A.C."/>
            <person name="Huang K."/>
            <person name="Zucker J."/>
            <person name="Coleman M.L."/>
            <person name="Rodrigue S."/>
            <person name="Chen F."/>
            <person name="Lapidus A."/>
            <person name="Ferriera S."/>
            <person name="Johnson J."/>
            <person name="Steglich C."/>
            <person name="Church G.M."/>
            <person name="Richardson P."/>
            <person name="Chisholm S.W."/>
        </authorList>
    </citation>
    <scope>NUCLEOTIDE SEQUENCE [LARGE SCALE GENOMIC DNA]</scope>
    <source>
        <strain>MIT 9515</strain>
    </source>
</reference>